<protein>
    <recommendedName>
        <fullName evidence="1">Glutamate-1-semialdehyde 2,1-aminomutase</fullName>
        <shortName evidence="1">GSA</shortName>
        <ecNumber evidence="1">5.4.3.8</ecNumber>
    </recommendedName>
    <alternativeName>
        <fullName evidence="1">Glutamate-1-semialdehyde aminotransferase</fullName>
        <shortName evidence="1">GSA-AT</shortName>
    </alternativeName>
</protein>
<organism>
    <name type="scientific">Chlorobium phaeovibrioides (strain DSM 265 / 1930)</name>
    <name type="common">Prosthecochloris vibrioformis (strain DSM 265)</name>
    <dbReference type="NCBI Taxonomy" id="290318"/>
    <lineage>
        <taxon>Bacteria</taxon>
        <taxon>Pseudomonadati</taxon>
        <taxon>Chlorobiota</taxon>
        <taxon>Chlorobiia</taxon>
        <taxon>Chlorobiales</taxon>
        <taxon>Chlorobiaceae</taxon>
        <taxon>Chlorobium/Pelodictyon group</taxon>
        <taxon>Chlorobium</taxon>
    </lineage>
</organism>
<gene>
    <name evidence="1" type="primary">hemL</name>
    <name type="ordered locus">Cvib_1681</name>
</gene>
<sequence length="431" mass="46034">MPKLTRSAELFEKAKKFIPGGVNSPVRAFKSVGGNPIFMAKGQGAYMTDVDGNTYLDYVGSWGPFILGSMHPRITAALERTLTTIGTSFGTPIEMEIEIAELLVEIVPSIEMVRMVNSGTEATMSAVRLARGCTGRDKIIKFEGCYHGHGDSFLIKAGSGALTLGAPDSPGVTKGTAEDTLNAKYNDIASVELLVAENKGNIAAIIIEPVAGNTGVIPAKKEFLQALRDLCDREGIVLIFDEVMCGFRVALGGAQELYGITPDLTTMGKIIGGGLPVGAFGGKRSLMENVAPLGGVYQAGTLSGNPLALTAGIETLKILKDENPYPELERKAAFLEAGFRDNMQKLGLNFVQNRVGSMACLFFTETPVESYDSAITCDTEMFGRYFTSMLDQGIYLAPSQFEAMFTSAVHSNADLEKTVKANYIALQAAAK</sequence>
<keyword id="KW-0149">Chlorophyll biosynthesis</keyword>
<keyword id="KW-0963">Cytoplasm</keyword>
<keyword id="KW-0413">Isomerase</keyword>
<keyword id="KW-0627">Porphyrin biosynthesis</keyword>
<keyword id="KW-0663">Pyridoxal phosphate</keyword>
<dbReference type="EC" id="5.4.3.8" evidence="1"/>
<dbReference type="EMBL" id="CP000607">
    <property type="protein sequence ID" value="ABP37691.1"/>
    <property type="molecule type" value="Genomic_DNA"/>
</dbReference>
<dbReference type="SMR" id="A4SGT2"/>
<dbReference type="STRING" id="290318.Cvib_1681"/>
<dbReference type="KEGG" id="pvi:Cvib_1681"/>
<dbReference type="eggNOG" id="COG0001">
    <property type="taxonomic scope" value="Bacteria"/>
</dbReference>
<dbReference type="HOGENOM" id="CLU_016922_1_5_10"/>
<dbReference type="OrthoDB" id="9807885at2"/>
<dbReference type="UniPathway" id="UPA00251">
    <property type="reaction ID" value="UER00317"/>
</dbReference>
<dbReference type="UniPathway" id="UPA00668"/>
<dbReference type="GO" id="GO:0005737">
    <property type="term" value="C:cytoplasm"/>
    <property type="evidence" value="ECO:0007669"/>
    <property type="project" value="UniProtKB-SubCell"/>
</dbReference>
<dbReference type="GO" id="GO:0042286">
    <property type="term" value="F:glutamate-1-semialdehyde 2,1-aminomutase activity"/>
    <property type="evidence" value="ECO:0007669"/>
    <property type="project" value="UniProtKB-UniRule"/>
</dbReference>
<dbReference type="GO" id="GO:0030170">
    <property type="term" value="F:pyridoxal phosphate binding"/>
    <property type="evidence" value="ECO:0007669"/>
    <property type="project" value="InterPro"/>
</dbReference>
<dbReference type="GO" id="GO:0008483">
    <property type="term" value="F:transaminase activity"/>
    <property type="evidence" value="ECO:0007669"/>
    <property type="project" value="InterPro"/>
</dbReference>
<dbReference type="GO" id="GO:0015995">
    <property type="term" value="P:chlorophyll biosynthetic process"/>
    <property type="evidence" value="ECO:0007669"/>
    <property type="project" value="UniProtKB-UniPathway"/>
</dbReference>
<dbReference type="GO" id="GO:0006782">
    <property type="term" value="P:protoporphyrinogen IX biosynthetic process"/>
    <property type="evidence" value="ECO:0007669"/>
    <property type="project" value="UniProtKB-UniRule"/>
</dbReference>
<dbReference type="CDD" id="cd00610">
    <property type="entry name" value="OAT_like"/>
    <property type="match status" value="1"/>
</dbReference>
<dbReference type="FunFam" id="3.40.640.10:FF:000021">
    <property type="entry name" value="Glutamate-1-semialdehyde 2,1-aminomutase"/>
    <property type="match status" value="1"/>
</dbReference>
<dbReference type="Gene3D" id="3.90.1150.10">
    <property type="entry name" value="Aspartate Aminotransferase, domain 1"/>
    <property type="match status" value="1"/>
</dbReference>
<dbReference type="Gene3D" id="3.40.640.10">
    <property type="entry name" value="Type I PLP-dependent aspartate aminotransferase-like (Major domain)"/>
    <property type="match status" value="1"/>
</dbReference>
<dbReference type="HAMAP" id="MF_00375">
    <property type="entry name" value="HemL_aminotrans_3"/>
    <property type="match status" value="1"/>
</dbReference>
<dbReference type="InterPro" id="IPR004639">
    <property type="entry name" value="4pyrrol_synth_GluAld_NH2Trfase"/>
</dbReference>
<dbReference type="InterPro" id="IPR005814">
    <property type="entry name" value="Aminotrans_3"/>
</dbReference>
<dbReference type="InterPro" id="IPR049704">
    <property type="entry name" value="Aminotrans_3_PPA_site"/>
</dbReference>
<dbReference type="InterPro" id="IPR015424">
    <property type="entry name" value="PyrdxlP-dep_Trfase"/>
</dbReference>
<dbReference type="InterPro" id="IPR015421">
    <property type="entry name" value="PyrdxlP-dep_Trfase_major"/>
</dbReference>
<dbReference type="InterPro" id="IPR015422">
    <property type="entry name" value="PyrdxlP-dep_Trfase_small"/>
</dbReference>
<dbReference type="NCBIfam" id="TIGR00713">
    <property type="entry name" value="hemL"/>
    <property type="match status" value="1"/>
</dbReference>
<dbReference type="NCBIfam" id="NF000818">
    <property type="entry name" value="PRK00062.1"/>
    <property type="match status" value="1"/>
</dbReference>
<dbReference type="PANTHER" id="PTHR43713">
    <property type="entry name" value="GLUTAMATE-1-SEMIALDEHYDE 2,1-AMINOMUTASE"/>
    <property type="match status" value="1"/>
</dbReference>
<dbReference type="PANTHER" id="PTHR43713:SF3">
    <property type="entry name" value="GLUTAMATE-1-SEMIALDEHYDE 2,1-AMINOMUTASE 1, CHLOROPLASTIC-RELATED"/>
    <property type="match status" value="1"/>
</dbReference>
<dbReference type="Pfam" id="PF00202">
    <property type="entry name" value="Aminotran_3"/>
    <property type="match status" value="1"/>
</dbReference>
<dbReference type="SUPFAM" id="SSF53383">
    <property type="entry name" value="PLP-dependent transferases"/>
    <property type="match status" value="1"/>
</dbReference>
<dbReference type="PROSITE" id="PS00600">
    <property type="entry name" value="AA_TRANSFER_CLASS_3"/>
    <property type="match status" value="1"/>
</dbReference>
<accession>A4SGT2</accession>
<feature type="chain" id="PRO_1000079928" description="Glutamate-1-semialdehyde 2,1-aminomutase">
    <location>
        <begin position="1"/>
        <end position="431"/>
    </location>
</feature>
<feature type="modified residue" description="N6-(pyridoxal phosphate)lysine" evidence="1">
    <location>
        <position position="269"/>
    </location>
</feature>
<evidence type="ECO:0000255" key="1">
    <source>
        <dbReference type="HAMAP-Rule" id="MF_00375"/>
    </source>
</evidence>
<name>GSA_CHLPM</name>
<comment type="catalytic activity">
    <reaction evidence="1">
        <text>(S)-4-amino-5-oxopentanoate = 5-aminolevulinate</text>
        <dbReference type="Rhea" id="RHEA:14265"/>
        <dbReference type="ChEBI" id="CHEBI:57501"/>
        <dbReference type="ChEBI" id="CHEBI:356416"/>
        <dbReference type="EC" id="5.4.3.8"/>
    </reaction>
</comment>
<comment type="cofactor">
    <cofactor evidence="1">
        <name>pyridoxal 5'-phosphate</name>
        <dbReference type="ChEBI" id="CHEBI:597326"/>
    </cofactor>
</comment>
<comment type="pathway">
    <text evidence="1">Porphyrin-containing compound metabolism; protoporphyrin-IX biosynthesis; 5-aminolevulinate from L-glutamyl-tRNA(Glu): step 2/2.</text>
</comment>
<comment type="pathway">
    <text evidence="1">Porphyrin-containing compound metabolism; chlorophyll biosynthesis.</text>
</comment>
<comment type="subunit">
    <text evidence="1">Homodimer.</text>
</comment>
<comment type="subcellular location">
    <subcellularLocation>
        <location evidence="1">Cytoplasm</location>
    </subcellularLocation>
</comment>
<comment type="similarity">
    <text evidence="1">Belongs to the class-III pyridoxal-phosphate-dependent aminotransferase family. HemL subfamily.</text>
</comment>
<reference key="1">
    <citation type="submission" date="2007-03" db="EMBL/GenBank/DDBJ databases">
        <title>Complete sequence of Prosthecochloris vibrioformis DSM 265.</title>
        <authorList>
            <consortium name="US DOE Joint Genome Institute"/>
            <person name="Copeland A."/>
            <person name="Lucas S."/>
            <person name="Lapidus A."/>
            <person name="Barry K."/>
            <person name="Detter J.C."/>
            <person name="Glavina del Rio T."/>
            <person name="Hammon N."/>
            <person name="Israni S."/>
            <person name="Pitluck S."/>
            <person name="Schmutz J."/>
            <person name="Larimer F."/>
            <person name="Land M."/>
            <person name="Hauser L."/>
            <person name="Mikhailova N."/>
            <person name="Li T."/>
            <person name="Overmann J."/>
            <person name="Schuster S.C."/>
            <person name="Bryant D.A."/>
            <person name="Richardson P."/>
        </authorList>
    </citation>
    <scope>NUCLEOTIDE SEQUENCE [LARGE SCALE GENOMIC DNA]</scope>
    <source>
        <strain>DSM 265 / 1930</strain>
    </source>
</reference>
<proteinExistence type="inferred from homology"/>